<dbReference type="EMBL" id="CP000851">
    <property type="protein sequence ID" value="ABV87802.1"/>
    <property type="molecule type" value="Genomic_DNA"/>
</dbReference>
<dbReference type="RefSeq" id="WP_012155711.1">
    <property type="nucleotide sequence ID" value="NC_009901.1"/>
</dbReference>
<dbReference type="SMR" id="A8H5G5"/>
<dbReference type="STRING" id="398579.Spea_2482"/>
<dbReference type="KEGG" id="spl:Spea_2482"/>
<dbReference type="eggNOG" id="COG3132">
    <property type="taxonomic scope" value="Bacteria"/>
</dbReference>
<dbReference type="HOGENOM" id="CLU_057831_2_0_6"/>
<dbReference type="OrthoDB" id="9784785at2"/>
<dbReference type="Proteomes" id="UP000002608">
    <property type="component" value="Chromosome"/>
</dbReference>
<dbReference type="Gene3D" id="1.10.10.10">
    <property type="entry name" value="Winged helix-like DNA-binding domain superfamily/Winged helix DNA-binding domain"/>
    <property type="match status" value="2"/>
</dbReference>
<dbReference type="HAMAP" id="MF_01584">
    <property type="entry name" value="UPF0502"/>
    <property type="match status" value="1"/>
</dbReference>
<dbReference type="InterPro" id="IPR007432">
    <property type="entry name" value="DUF480"/>
</dbReference>
<dbReference type="InterPro" id="IPR036388">
    <property type="entry name" value="WH-like_DNA-bd_sf"/>
</dbReference>
<dbReference type="InterPro" id="IPR036390">
    <property type="entry name" value="WH_DNA-bd_sf"/>
</dbReference>
<dbReference type="PANTHER" id="PTHR38768">
    <property type="entry name" value="UPF0502 PROTEIN YCEH"/>
    <property type="match status" value="1"/>
</dbReference>
<dbReference type="PANTHER" id="PTHR38768:SF1">
    <property type="entry name" value="UPF0502 PROTEIN YCEH"/>
    <property type="match status" value="1"/>
</dbReference>
<dbReference type="Pfam" id="PF04337">
    <property type="entry name" value="DUF480"/>
    <property type="match status" value="1"/>
</dbReference>
<dbReference type="SUPFAM" id="SSF46785">
    <property type="entry name" value="Winged helix' DNA-binding domain"/>
    <property type="match status" value="2"/>
</dbReference>
<reference key="1">
    <citation type="submission" date="2007-10" db="EMBL/GenBank/DDBJ databases">
        <title>Complete sequence of Shewanella pealeana ATCC 700345.</title>
        <authorList>
            <consortium name="US DOE Joint Genome Institute"/>
            <person name="Copeland A."/>
            <person name="Lucas S."/>
            <person name="Lapidus A."/>
            <person name="Barry K."/>
            <person name="Glavina del Rio T."/>
            <person name="Dalin E."/>
            <person name="Tice H."/>
            <person name="Pitluck S."/>
            <person name="Chertkov O."/>
            <person name="Brettin T."/>
            <person name="Bruce D."/>
            <person name="Detter J.C."/>
            <person name="Han C."/>
            <person name="Schmutz J."/>
            <person name="Larimer F."/>
            <person name="Land M."/>
            <person name="Hauser L."/>
            <person name="Kyrpides N."/>
            <person name="Kim E."/>
            <person name="Zhao J.-S.Z."/>
            <person name="Manno D."/>
            <person name="Hawari J."/>
            <person name="Richardson P."/>
        </authorList>
    </citation>
    <scope>NUCLEOTIDE SEQUENCE [LARGE SCALE GENOMIC DNA]</scope>
    <source>
        <strain>ATCC 700345 / ANG-SQ1</strain>
    </source>
</reference>
<accession>A8H5G5</accession>
<keyword id="KW-1185">Reference proteome</keyword>
<gene>
    <name type="ordered locus">Spea_2482</name>
</gene>
<proteinExistence type="inferred from homology"/>
<comment type="similarity">
    <text evidence="1">Belongs to the UPF0502 family.</text>
</comment>
<name>Y2482_SHEPA</name>
<feature type="chain" id="PRO_1000087949" description="UPF0502 protein Spea_2482">
    <location>
        <begin position="1"/>
        <end position="216"/>
    </location>
</feature>
<evidence type="ECO:0000255" key="1">
    <source>
        <dbReference type="HAMAP-Rule" id="MF_01584"/>
    </source>
</evidence>
<sequence>MELTPHEARVIGVLLEKEITTPEQYPLSLNSLTSGCNQKTSREPVLNLSESEVQNTLDALTKKRLISEQSGFGSRVVKYKHRFCNTEFSDLQLKSSELAVICLLLLRGPQTPGELRTRSNRLHDFHDVSEVEATLNELHRREAPLVMLLAKEPGKREARYRQLFSEVDANLVQALSSSLGAETASPQEKSALEARVCTLEQEVTELKAQLQSLLNN</sequence>
<organism>
    <name type="scientific">Shewanella pealeana (strain ATCC 700345 / ANG-SQ1)</name>
    <dbReference type="NCBI Taxonomy" id="398579"/>
    <lineage>
        <taxon>Bacteria</taxon>
        <taxon>Pseudomonadati</taxon>
        <taxon>Pseudomonadota</taxon>
        <taxon>Gammaproteobacteria</taxon>
        <taxon>Alteromonadales</taxon>
        <taxon>Shewanellaceae</taxon>
        <taxon>Shewanella</taxon>
    </lineage>
</organism>
<protein>
    <recommendedName>
        <fullName evidence="1">UPF0502 protein Spea_2482</fullName>
    </recommendedName>
</protein>